<name>RL25_BURCM</name>
<keyword id="KW-0687">Ribonucleoprotein</keyword>
<keyword id="KW-0689">Ribosomal protein</keyword>
<keyword id="KW-0694">RNA-binding</keyword>
<keyword id="KW-0699">rRNA-binding</keyword>
<protein>
    <recommendedName>
        <fullName evidence="1">Large ribosomal subunit protein bL25</fullName>
    </recommendedName>
    <alternativeName>
        <fullName evidence="2">50S ribosomal protein L25</fullName>
    </alternativeName>
    <alternativeName>
        <fullName evidence="1">General stress protein CTC</fullName>
    </alternativeName>
</protein>
<proteinExistence type="inferred from homology"/>
<evidence type="ECO:0000255" key="1">
    <source>
        <dbReference type="HAMAP-Rule" id="MF_01334"/>
    </source>
</evidence>
<evidence type="ECO:0000305" key="2"/>
<organism>
    <name type="scientific">Burkholderia ambifaria (strain ATCC BAA-244 / DSM 16087 / CCUG 44356 / LMG 19182 / AMMD)</name>
    <name type="common">Burkholderia cepacia (strain AMMD)</name>
    <dbReference type="NCBI Taxonomy" id="339670"/>
    <lineage>
        <taxon>Bacteria</taxon>
        <taxon>Pseudomonadati</taxon>
        <taxon>Pseudomonadota</taxon>
        <taxon>Betaproteobacteria</taxon>
        <taxon>Burkholderiales</taxon>
        <taxon>Burkholderiaceae</taxon>
        <taxon>Burkholderia</taxon>
        <taxon>Burkholderia cepacia complex</taxon>
    </lineage>
</organism>
<comment type="function">
    <text evidence="1">This is one of the proteins that binds to the 5S RNA in the ribosome where it forms part of the central protuberance.</text>
</comment>
<comment type="subunit">
    <text evidence="1">Part of the 50S ribosomal subunit; part of the 5S rRNA/L5/L18/L25 subcomplex. Contacts the 5S rRNA. Binds to the 5S rRNA independently of L5 and L18.</text>
</comment>
<comment type="similarity">
    <text evidence="1">Belongs to the bacterial ribosomal protein bL25 family. CTC subfamily.</text>
</comment>
<dbReference type="EMBL" id="CP000440">
    <property type="protein sequence ID" value="ABI88419.1"/>
    <property type="molecule type" value="Genomic_DNA"/>
</dbReference>
<dbReference type="RefSeq" id="WP_006753282.1">
    <property type="nucleotide sequence ID" value="NZ_CP009798.1"/>
</dbReference>
<dbReference type="SMR" id="Q0BBQ4"/>
<dbReference type="KEGG" id="bam:Bamb_2863"/>
<dbReference type="PATRIC" id="fig|339670.21.peg.2024"/>
<dbReference type="eggNOG" id="COG1825">
    <property type="taxonomic scope" value="Bacteria"/>
</dbReference>
<dbReference type="Proteomes" id="UP000000662">
    <property type="component" value="Chromosome 1"/>
</dbReference>
<dbReference type="GO" id="GO:0022625">
    <property type="term" value="C:cytosolic large ribosomal subunit"/>
    <property type="evidence" value="ECO:0007669"/>
    <property type="project" value="TreeGrafter"/>
</dbReference>
<dbReference type="GO" id="GO:0008097">
    <property type="term" value="F:5S rRNA binding"/>
    <property type="evidence" value="ECO:0007669"/>
    <property type="project" value="InterPro"/>
</dbReference>
<dbReference type="GO" id="GO:0003735">
    <property type="term" value="F:structural constituent of ribosome"/>
    <property type="evidence" value="ECO:0007669"/>
    <property type="project" value="InterPro"/>
</dbReference>
<dbReference type="GO" id="GO:0006412">
    <property type="term" value="P:translation"/>
    <property type="evidence" value="ECO:0007669"/>
    <property type="project" value="UniProtKB-UniRule"/>
</dbReference>
<dbReference type="CDD" id="cd00495">
    <property type="entry name" value="Ribosomal_L25_TL5_CTC"/>
    <property type="match status" value="1"/>
</dbReference>
<dbReference type="Gene3D" id="2.170.120.20">
    <property type="entry name" value="Ribosomal protein L25, beta domain"/>
    <property type="match status" value="1"/>
</dbReference>
<dbReference type="Gene3D" id="2.40.240.10">
    <property type="entry name" value="Ribosomal Protein L25, Chain P"/>
    <property type="match status" value="1"/>
</dbReference>
<dbReference type="HAMAP" id="MF_01336">
    <property type="entry name" value="Ribosomal_bL25"/>
    <property type="match status" value="1"/>
</dbReference>
<dbReference type="HAMAP" id="MF_01334">
    <property type="entry name" value="Ribosomal_bL25_CTC"/>
    <property type="match status" value="1"/>
</dbReference>
<dbReference type="InterPro" id="IPR020056">
    <property type="entry name" value="Rbsml_bL25/Gln-tRNA_synth_N"/>
</dbReference>
<dbReference type="InterPro" id="IPR011035">
    <property type="entry name" value="Ribosomal_bL25/Gln-tRNA_synth"/>
</dbReference>
<dbReference type="InterPro" id="IPR020057">
    <property type="entry name" value="Ribosomal_bL25_b-dom"/>
</dbReference>
<dbReference type="InterPro" id="IPR037121">
    <property type="entry name" value="Ribosomal_bL25_C"/>
</dbReference>
<dbReference type="InterPro" id="IPR001021">
    <property type="entry name" value="Ribosomal_bL25_long"/>
</dbReference>
<dbReference type="InterPro" id="IPR020055">
    <property type="entry name" value="Ribosomal_bL25_short"/>
</dbReference>
<dbReference type="InterPro" id="IPR029751">
    <property type="entry name" value="Ribosomal_L25_dom"/>
</dbReference>
<dbReference type="InterPro" id="IPR020930">
    <property type="entry name" value="Ribosomal_uL5_bac-type"/>
</dbReference>
<dbReference type="NCBIfam" id="TIGR00731">
    <property type="entry name" value="bL25_bact_ctc"/>
    <property type="match status" value="1"/>
</dbReference>
<dbReference type="NCBIfam" id="NF004128">
    <property type="entry name" value="PRK05618.1-2"/>
    <property type="match status" value="1"/>
</dbReference>
<dbReference type="NCBIfam" id="NF004130">
    <property type="entry name" value="PRK05618.1-5"/>
    <property type="match status" value="1"/>
</dbReference>
<dbReference type="NCBIfam" id="NF004612">
    <property type="entry name" value="PRK05943.1"/>
    <property type="match status" value="1"/>
</dbReference>
<dbReference type="PANTHER" id="PTHR33284">
    <property type="entry name" value="RIBOSOMAL PROTEIN L25/GLN-TRNA SYNTHETASE, ANTI-CODON-BINDING DOMAIN-CONTAINING PROTEIN"/>
    <property type="match status" value="1"/>
</dbReference>
<dbReference type="PANTHER" id="PTHR33284:SF1">
    <property type="entry name" value="RIBOSOMAL PROTEIN L25_GLN-TRNA SYNTHETASE, ANTI-CODON-BINDING DOMAIN-CONTAINING PROTEIN"/>
    <property type="match status" value="1"/>
</dbReference>
<dbReference type="Pfam" id="PF01386">
    <property type="entry name" value="Ribosomal_L25p"/>
    <property type="match status" value="1"/>
</dbReference>
<dbReference type="Pfam" id="PF14693">
    <property type="entry name" value="Ribosomal_TL5_C"/>
    <property type="match status" value="1"/>
</dbReference>
<dbReference type="SUPFAM" id="SSF50715">
    <property type="entry name" value="Ribosomal protein L25-like"/>
    <property type="match status" value="1"/>
</dbReference>
<reference key="1">
    <citation type="submission" date="2006-08" db="EMBL/GenBank/DDBJ databases">
        <title>Complete sequence of chromosome 1 of Burkholderia cepacia AMMD.</title>
        <authorList>
            <person name="Copeland A."/>
            <person name="Lucas S."/>
            <person name="Lapidus A."/>
            <person name="Barry K."/>
            <person name="Detter J.C."/>
            <person name="Glavina del Rio T."/>
            <person name="Hammon N."/>
            <person name="Israni S."/>
            <person name="Pitluck S."/>
            <person name="Bruce D."/>
            <person name="Chain P."/>
            <person name="Malfatti S."/>
            <person name="Shin M."/>
            <person name="Vergez L."/>
            <person name="Schmutz J."/>
            <person name="Larimer F."/>
            <person name="Land M."/>
            <person name="Hauser L."/>
            <person name="Kyrpides N."/>
            <person name="Kim E."/>
            <person name="Parke J."/>
            <person name="Coenye T."/>
            <person name="Konstantinidis K."/>
            <person name="Ramette A."/>
            <person name="Tiedje J."/>
            <person name="Richardson P."/>
        </authorList>
    </citation>
    <scope>NUCLEOTIDE SEQUENCE [LARGE SCALE GENOMIC DNA]</scope>
    <source>
        <strain>ATCC BAA-244 / DSM 16087 / CCUG 44356 / LMG 19182 / AMMD</strain>
    </source>
</reference>
<sequence length="202" mass="21624">MKVVAFERQEQGTGASRRLRNAGKTTGIVYGGEAAPQKIELDHNALWHALKKEAFHSSILDLEVAGQSQQVLLRDVQYHPFKQLVLHVDFQRVDAKKKLHTKVPLHFLNAEVSPAVKLSSAVVSHVATEIEIECLPSALPEFLEVDLSKIEAGQSLHAKDIALPKGVALVAHIDAENPVVASATIPAGAVSDAAGEGETPAA</sequence>
<feature type="chain" id="PRO_1000052872" description="Large ribosomal subunit protein bL25">
    <location>
        <begin position="1"/>
        <end position="202"/>
    </location>
</feature>
<accession>Q0BBQ4</accession>
<gene>
    <name evidence="1" type="primary">rplY</name>
    <name evidence="1" type="synonym">ctc</name>
    <name type="ordered locus">Bamb_2863</name>
</gene>